<evidence type="ECO:0000269" key="1">
    <source>
    </source>
</evidence>
<evidence type="ECO:0000269" key="2">
    <source>
    </source>
</evidence>
<evidence type="ECO:0000269" key="3">
    <source>
    </source>
</evidence>
<evidence type="ECO:0000305" key="4"/>
<evidence type="ECO:0000305" key="5">
    <source>
    </source>
</evidence>
<dbReference type="EMBL" id="X17014">
    <property type="protein sequence ID" value="CAA34880.1"/>
    <property type="molecule type" value="Genomic_DNA"/>
</dbReference>
<dbReference type="EMBL" id="D26185">
    <property type="protein sequence ID" value="BAA05259.1"/>
    <property type="molecule type" value="Genomic_DNA"/>
</dbReference>
<dbReference type="EMBL" id="AL009126">
    <property type="protein sequence ID" value="CAB11799.2"/>
    <property type="molecule type" value="Genomic_DNA"/>
</dbReference>
<dbReference type="PIR" id="B41869">
    <property type="entry name" value="B41869"/>
</dbReference>
<dbReference type="RefSeq" id="NP_387904.2">
    <property type="nucleotide sequence ID" value="NC_000964.3"/>
</dbReference>
<dbReference type="RefSeq" id="WP_003225421.1">
    <property type="nucleotide sequence ID" value="NZ_OZ025638.1"/>
</dbReference>
<dbReference type="SMR" id="P24282"/>
<dbReference type="FunCoup" id="P24282">
    <property type="interactions" value="50"/>
</dbReference>
<dbReference type="STRING" id="224308.BSU00230"/>
<dbReference type="PaxDb" id="224308-BSU00230"/>
<dbReference type="EnsemblBacteria" id="CAB11799">
    <property type="protein sequence ID" value="CAB11799"/>
    <property type="gene ID" value="BSU_00230"/>
</dbReference>
<dbReference type="GeneID" id="11237780"/>
<dbReference type="GeneID" id="937025"/>
<dbReference type="KEGG" id="bsu:BSU00230"/>
<dbReference type="PATRIC" id="fig|224308.179.peg.23"/>
<dbReference type="eggNOG" id="ENOG50333K6">
    <property type="taxonomic scope" value="Bacteria"/>
</dbReference>
<dbReference type="InParanoid" id="P24282"/>
<dbReference type="OrthoDB" id="2692225at2"/>
<dbReference type="BioCyc" id="BSUB:BSU00230-MONOMER"/>
<dbReference type="PRO" id="PR:P24282"/>
<dbReference type="Proteomes" id="UP000001570">
    <property type="component" value="Chromosome"/>
</dbReference>
<dbReference type="GO" id="GO:0016020">
    <property type="term" value="C:membrane"/>
    <property type="evidence" value="ECO:0007669"/>
    <property type="project" value="UniProtKB-KW"/>
</dbReference>
<dbReference type="GO" id="GO:0046872">
    <property type="term" value="F:metal ion binding"/>
    <property type="evidence" value="ECO:0007669"/>
    <property type="project" value="UniProtKB-KW"/>
</dbReference>
<dbReference type="GO" id="GO:0030435">
    <property type="term" value="P:sporulation resulting in formation of a cellular spore"/>
    <property type="evidence" value="ECO:0007669"/>
    <property type="project" value="UniProtKB-KW"/>
</dbReference>
<dbReference type="InterPro" id="IPR010001">
    <property type="entry name" value="BofA"/>
</dbReference>
<dbReference type="NCBIfam" id="TIGR02862">
    <property type="entry name" value="spore_BofA"/>
    <property type="match status" value="1"/>
</dbReference>
<dbReference type="Pfam" id="PF07441">
    <property type="entry name" value="BofA"/>
    <property type="match status" value="1"/>
</dbReference>
<protein>
    <recommendedName>
        <fullName>Sigma-K factor-processing regulatory protein BofA</fullName>
    </recommendedName>
    <alternativeName>
        <fullName>Bypass-of-forespore protein A</fullName>
    </alternativeName>
</protein>
<name>BOFA_BACSU</name>
<sequence length="87" mass="8964">MEPIFIIGIILGLVILLFLSGSAAKPLKWIGITAVKFVAGALLLVCVNMFGGSLGIHVPINLVTTAISGILGIPGIAALVVIKQFII</sequence>
<reference key="1">
    <citation type="journal article" date="1990" name="Nucleic Acids Res.">
        <title>Molecular cloning, genetic characterization and DNA sequence analysis of the recM region of Bacillus subtilis.</title>
        <authorList>
            <person name="Alonso J.C."/>
            <person name="Shirahige K."/>
            <person name="Ogasawara N."/>
        </authorList>
    </citation>
    <scope>NUCLEOTIDE SEQUENCE [GENOMIC DNA]</scope>
    <source>
        <strain>168 / YB886 / BG214</strain>
    </source>
</reference>
<reference key="2">
    <citation type="journal article" date="1994" name="DNA Res.">
        <title>Systematic sequencing of the 180 kilobase region of the Bacillus subtilis chromosome containing the replication origin.</title>
        <authorList>
            <person name="Ogasawara N."/>
            <person name="Nakai S."/>
            <person name="Yoshikawa H."/>
        </authorList>
    </citation>
    <scope>NUCLEOTIDE SEQUENCE [GENOMIC DNA]</scope>
    <source>
        <strain>168</strain>
    </source>
</reference>
<reference key="3">
    <citation type="journal article" date="1997" name="Nature">
        <title>The complete genome sequence of the Gram-positive bacterium Bacillus subtilis.</title>
        <authorList>
            <person name="Kunst F."/>
            <person name="Ogasawara N."/>
            <person name="Moszer I."/>
            <person name="Albertini A.M."/>
            <person name="Alloni G."/>
            <person name="Azevedo V."/>
            <person name="Bertero M.G."/>
            <person name="Bessieres P."/>
            <person name="Bolotin A."/>
            <person name="Borchert S."/>
            <person name="Borriss R."/>
            <person name="Boursier L."/>
            <person name="Brans A."/>
            <person name="Braun M."/>
            <person name="Brignell S.C."/>
            <person name="Bron S."/>
            <person name="Brouillet S."/>
            <person name="Bruschi C.V."/>
            <person name="Caldwell B."/>
            <person name="Capuano V."/>
            <person name="Carter N.M."/>
            <person name="Choi S.-K."/>
            <person name="Codani J.-J."/>
            <person name="Connerton I.F."/>
            <person name="Cummings N.J."/>
            <person name="Daniel R.A."/>
            <person name="Denizot F."/>
            <person name="Devine K.M."/>
            <person name="Duesterhoeft A."/>
            <person name="Ehrlich S.D."/>
            <person name="Emmerson P.T."/>
            <person name="Entian K.-D."/>
            <person name="Errington J."/>
            <person name="Fabret C."/>
            <person name="Ferrari E."/>
            <person name="Foulger D."/>
            <person name="Fritz C."/>
            <person name="Fujita M."/>
            <person name="Fujita Y."/>
            <person name="Fuma S."/>
            <person name="Galizzi A."/>
            <person name="Galleron N."/>
            <person name="Ghim S.-Y."/>
            <person name="Glaser P."/>
            <person name="Goffeau A."/>
            <person name="Golightly E.J."/>
            <person name="Grandi G."/>
            <person name="Guiseppi G."/>
            <person name="Guy B.J."/>
            <person name="Haga K."/>
            <person name="Haiech J."/>
            <person name="Harwood C.R."/>
            <person name="Henaut A."/>
            <person name="Hilbert H."/>
            <person name="Holsappel S."/>
            <person name="Hosono S."/>
            <person name="Hullo M.-F."/>
            <person name="Itaya M."/>
            <person name="Jones L.-M."/>
            <person name="Joris B."/>
            <person name="Karamata D."/>
            <person name="Kasahara Y."/>
            <person name="Klaerr-Blanchard M."/>
            <person name="Klein C."/>
            <person name="Kobayashi Y."/>
            <person name="Koetter P."/>
            <person name="Koningstein G."/>
            <person name="Krogh S."/>
            <person name="Kumano M."/>
            <person name="Kurita K."/>
            <person name="Lapidus A."/>
            <person name="Lardinois S."/>
            <person name="Lauber J."/>
            <person name="Lazarevic V."/>
            <person name="Lee S.-M."/>
            <person name="Levine A."/>
            <person name="Liu H."/>
            <person name="Masuda S."/>
            <person name="Mauel C."/>
            <person name="Medigue C."/>
            <person name="Medina N."/>
            <person name="Mellado R.P."/>
            <person name="Mizuno M."/>
            <person name="Moestl D."/>
            <person name="Nakai S."/>
            <person name="Noback M."/>
            <person name="Noone D."/>
            <person name="O'Reilly M."/>
            <person name="Ogawa K."/>
            <person name="Ogiwara A."/>
            <person name="Oudega B."/>
            <person name="Park S.-H."/>
            <person name="Parro V."/>
            <person name="Pohl T.M."/>
            <person name="Portetelle D."/>
            <person name="Porwollik S."/>
            <person name="Prescott A.M."/>
            <person name="Presecan E."/>
            <person name="Pujic P."/>
            <person name="Purnelle B."/>
            <person name="Rapoport G."/>
            <person name="Rey M."/>
            <person name="Reynolds S."/>
            <person name="Rieger M."/>
            <person name="Rivolta C."/>
            <person name="Rocha E."/>
            <person name="Roche B."/>
            <person name="Rose M."/>
            <person name="Sadaie Y."/>
            <person name="Sato T."/>
            <person name="Scanlan E."/>
            <person name="Schleich S."/>
            <person name="Schroeter R."/>
            <person name="Scoffone F."/>
            <person name="Sekiguchi J."/>
            <person name="Sekowska A."/>
            <person name="Seror S.J."/>
            <person name="Serror P."/>
            <person name="Shin B.-S."/>
            <person name="Soldo B."/>
            <person name="Sorokin A."/>
            <person name="Tacconi E."/>
            <person name="Takagi T."/>
            <person name="Takahashi H."/>
            <person name="Takemaru K."/>
            <person name="Takeuchi M."/>
            <person name="Tamakoshi A."/>
            <person name="Tanaka T."/>
            <person name="Terpstra P."/>
            <person name="Tognoni A."/>
            <person name="Tosato V."/>
            <person name="Uchiyama S."/>
            <person name="Vandenbol M."/>
            <person name="Vannier F."/>
            <person name="Vassarotti A."/>
            <person name="Viari A."/>
            <person name="Wambutt R."/>
            <person name="Wedler E."/>
            <person name="Wedler H."/>
            <person name="Weitzenegger T."/>
            <person name="Winters P."/>
            <person name="Wipat A."/>
            <person name="Yamamoto H."/>
            <person name="Yamane K."/>
            <person name="Yasumoto K."/>
            <person name="Yata K."/>
            <person name="Yoshida K."/>
            <person name="Yoshikawa H.-F."/>
            <person name="Zumstein E."/>
            <person name="Yoshikawa H."/>
            <person name="Danchin A."/>
        </authorList>
    </citation>
    <scope>NUCLEOTIDE SEQUENCE [LARGE SCALE GENOMIC DNA]</scope>
    <source>
        <strain>168</strain>
    </source>
</reference>
<reference key="4">
    <citation type="journal article" date="2009" name="Microbiology">
        <title>From a consortium sequence to a unified sequence: the Bacillus subtilis 168 reference genome a decade later.</title>
        <authorList>
            <person name="Barbe V."/>
            <person name="Cruveiller S."/>
            <person name="Kunst F."/>
            <person name="Lenoble P."/>
            <person name="Meurice G."/>
            <person name="Sekowska A."/>
            <person name="Vallenet D."/>
            <person name="Wang T."/>
            <person name="Moszer I."/>
            <person name="Medigue C."/>
            <person name="Danchin A."/>
        </authorList>
    </citation>
    <scope>SEQUENCE REVISION TO 55</scope>
</reference>
<reference key="5">
    <citation type="journal article" date="1992" name="J. Bacteriol.">
        <title>Characterization of bofA, a gene involved in intercompartmental regulation of pro-sigma K processing during sporulation in Bacillus subtilis.</title>
        <authorList>
            <person name="Ricca E."/>
            <person name="Cutting S.M."/>
            <person name="Losick R."/>
        </authorList>
    </citation>
    <scope>CHARACTERIZATION</scope>
</reference>
<reference key="6">
    <citation type="journal article" date="1997" name="Microbiology">
        <title>Membrane topology analysis of the Bacillus subtilis BofA protein involved in pro-sigma K processing.</title>
        <authorList>
            <person name="Varcamonti M."/>
            <person name="Marasco R."/>
            <person name="de Felice M."/>
            <person name="Sacco M."/>
        </authorList>
    </citation>
    <scope>TOPOLOGY</scope>
</reference>
<reference key="7">
    <citation type="journal article" date="1999" name="J. Bacteriol.">
        <title>Role of the sporulation protein BofA in regulating activation of the Bacillus subtilis developmental transcription factor sigmaK.</title>
        <authorList>
            <person name="Resnekov O."/>
        </authorList>
    </citation>
    <scope>FUNCTION IN STABILIZING SPOIVFA</scope>
</reference>
<reference key="8">
    <citation type="journal article" date="2002" name="Genes Dev.">
        <title>A sporulation membrane protein tethers the pro-sigmaK processing enzyme to its inhibitor and dictates its subcellular localization.</title>
        <authorList>
            <person name="Rudner D.Z."/>
            <person name="Losick R."/>
        </authorList>
    </citation>
    <scope>SUBUNIT</scope>
    <scope>FUNCTION</scope>
</reference>
<reference key="9">
    <citation type="journal article" date="2004" name="Proc. Natl. Acad. Sci. U.S.A.">
        <title>BofA protein inhibits intramembrane proteolysis of pro-sigmaK in an intercompartmental signaling pathway during Bacillus subtilis sporulation.</title>
        <authorList>
            <person name="Zhou R."/>
            <person name="Kroos L."/>
        </authorList>
    </citation>
    <scope>FUNCTION</scope>
</reference>
<proteinExistence type="evidence at protein level"/>
<organism>
    <name type="scientific">Bacillus subtilis (strain 168)</name>
    <dbReference type="NCBI Taxonomy" id="224308"/>
    <lineage>
        <taxon>Bacteria</taxon>
        <taxon>Bacillati</taxon>
        <taxon>Bacillota</taxon>
        <taxon>Bacilli</taxon>
        <taxon>Bacillales</taxon>
        <taxon>Bacillaceae</taxon>
        <taxon>Bacillus</taxon>
    </lineage>
</organism>
<comment type="function">
    <text evidence="1 2 3">Involved in the mediation of the intercompartmental coupling of pro-sigma K processing to events in the forespore. Inhibits SpoIVFB-processing activity until a signal has been received from the forespore. Could inhibit SpoIVFB metalloprotease activity by coordinating a zinc in the SpoIVFB active site, preventing access of a water molecule and the sequence of pro-sigma K, which are necessary for peptide bond hydrolysis to produce sigma-K.</text>
</comment>
<comment type="subunit">
    <text evidence="2">Forms a complex with SpoIVFA and SpoIVFB localized in the mother cell membrane surrounding the forespore.</text>
</comment>
<comment type="subcellular location">
    <subcellularLocation>
        <location>Forespore outer membrane</location>
        <topology>Multi-pass membrane protein</topology>
    </subcellularLocation>
</comment>
<feature type="chain" id="PRO_0000064969" description="Sigma-K factor-processing regulatory protein BofA">
    <location>
        <begin position="1"/>
        <end position="87"/>
    </location>
</feature>
<feature type="topological domain" description="Forespore intermembrane space" evidence="5">
    <location>
        <begin position="1"/>
        <end position="2"/>
    </location>
</feature>
<feature type="transmembrane region" description="Helical" evidence="4">
    <location>
        <begin position="3"/>
        <end position="23"/>
    </location>
</feature>
<feature type="topological domain" description="Cytoplasmic" evidence="5">
    <location>
        <begin position="24"/>
        <end position="36"/>
    </location>
</feature>
<feature type="transmembrane region" description="Helical" evidence="4">
    <location>
        <begin position="37"/>
        <end position="57"/>
    </location>
</feature>
<feature type="topological domain" description="Forespore intermembrane space" evidence="5">
    <location>
        <begin position="58"/>
        <end position="87"/>
    </location>
</feature>
<feature type="binding site">
    <location>
        <position position="57"/>
    </location>
    <ligand>
        <name>Zn(2+)</name>
        <dbReference type="ChEBI" id="CHEBI:29105"/>
        <note>ligand shared with SpoIVFB</note>
    </ligand>
</feature>
<feature type="sequence conflict" description="In Ref. 1; CAA34880 and 2; BAA05259." evidence="4" ref="1 2">
    <original>G</original>
    <variation>C</variation>
    <location>
        <position position="55"/>
    </location>
</feature>
<gene>
    <name type="primary">bofA</name>
    <name type="ordered locus">BSU00230</name>
</gene>
<keyword id="KW-0472">Membrane</keyword>
<keyword id="KW-0479">Metal-binding</keyword>
<keyword id="KW-1185">Reference proteome</keyword>
<keyword id="KW-0749">Sporulation</keyword>
<keyword id="KW-0812">Transmembrane</keyword>
<keyword id="KW-1133">Transmembrane helix</keyword>
<keyword id="KW-0862">Zinc</keyword>
<accession>P24282</accession>